<dbReference type="EC" id="2.8.1.8" evidence="1"/>
<dbReference type="EMBL" id="CP001050">
    <property type="protein sequence ID" value="ACF29696.1"/>
    <property type="molecule type" value="Genomic_DNA"/>
</dbReference>
<dbReference type="RefSeq" id="WP_003688622.1">
    <property type="nucleotide sequence ID" value="NC_011035.1"/>
</dbReference>
<dbReference type="SMR" id="B4RLK9"/>
<dbReference type="GeneID" id="66753131"/>
<dbReference type="KEGG" id="ngk:NGK_1019"/>
<dbReference type="HOGENOM" id="CLU_033144_2_1_4"/>
<dbReference type="UniPathway" id="UPA00538">
    <property type="reaction ID" value="UER00593"/>
</dbReference>
<dbReference type="Proteomes" id="UP000002564">
    <property type="component" value="Chromosome"/>
</dbReference>
<dbReference type="GO" id="GO:0005737">
    <property type="term" value="C:cytoplasm"/>
    <property type="evidence" value="ECO:0007669"/>
    <property type="project" value="UniProtKB-SubCell"/>
</dbReference>
<dbReference type="GO" id="GO:0051539">
    <property type="term" value="F:4 iron, 4 sulfur cluster binding"/>
    <property type="evidence" value="ECO:0007669"/>
    <property type="project" value="UniProtKB-UniRule"/>
</dbReference>
<dbReference type="GO" id="GO:0016992">
    <property type="term" value="F:lipoate synthase activity"/>
    <property type="evidence" value="ECO:0007669"/>
    <property type="project" value="UniProtKB-UniRule"/>
</dbReference>
<dbReference type="GO" id="GO:0046872">
    <property type="term" value="F:metal ion binding"/>
    <property type="evidence" value="ECO:0007669"/>
    <property type="project" value="UniProtKB-KW"/>
</dbReference>
<dbReference type="CDD" id="cd01335">
    <property type="entry name" value="Radical_SAM"/>
    <property type="match status" value="1"/>
</dbReference>
<dbReference type="FunFam" id="3.20.20.70:FF:000023">
    <property type="entry name" value="Lipoyl synthase"/>
    <property type="match status" value="1"/>
</dbReference>
<dbReference type="Gene3D" id="3.20.20.70">
    <property type="entry name" value="Aldolase class I"/>
    <property type="match status" value="1"/>
</dbReference>
<dbReference type="HAMAP" id="MF_00206">
    <property type="entry name" value="Lipoyl_synth"/>
    <property type="match status" value="1"/>
</dbReference>
<dbReference type="InterPro" id="IPR013785">
    <property type="entry name" value="Aldolase_TIM"/>
</dbReference>
<dbReference type="InterPro" id="IPR006638">
    <property type="entry name" value="Elp3/MiaA/NifB-like_rSAM"/>
</dbReference>
<dbReference type="InterPro" id="IPR031691">
    <property type="entry name" value="LIAS_N"/>
</dbReference>
<dbReference type="InterPro" id="IPR003698">
    <property type="entry name" value="Lipoyl_synth"/>
</dbReference>
<dbReference type="InterPro" id="IPR007197">
    <property type="entry name" value="rSAM"/>
</dbReference>
<dbReference type="NCBIfam" id="TIGR00510">
    <property type="entry name" value="lipA"/>
    <property type="match status" value="1"/>
</dbReference>
<dbReference type="NCBIfam" id="NF004019">
    <property type="entry name" value="PRK05481.1"/>
    <property type="match status" value="1"/>
</dbReference>
<dbReference type="NCBIfam" id="NF009544">
    <property type="entry name" value="PRK12928.1"/>
    <property type="match status" value="1"/>
</dbReference>
<dbReference type="PANTHER" id="PTHR10949">
    <property type="entry name" value="LIPOYL SYNTHASE"/>
    <property type="match status" value="1"/>
</dbReference>
<dbReference type="PANTHER" id="PTHR10949:SF0">
    <property type="entry name" value="LIPOYL SYNTHASE, MITOCHONDRIAL"/>
    <property type="match status" value="1"/>
</dbReference>
<dbReference type="Pfam" id="PF16881">
    <property type="entry name" value="LIAS_N"/>
    <property type="match status" value="1"/>
</dbReference>
<dbReference type="Pfam" id="PF04055">
    <property type="entry name" value="Radical_SAM"/>
    <property type="match status" value="1"/>
</dbReference>
<dbReference type="PIRSF" id="PIRSF005963">
    <property type="entry name" value="Lipoyl_synth"/>
    <property type="match status" value="1"/>
</dbReference>
<dbReference type="SFLD" id="SFLDF00271">
    <property type="entry name" value="lipoyl_synthase"/>
    <property type="match status" value="1"/>
</dbReference>
<dbReference type="SFLD" id="SFLDS00029">
    <property type="entry name" value="Radical_SAM"/>
    <property type="match status" value="1"/>
</dbReference>
<dbReference type="SMART" id="SM00729">
    <property type="entry name" value="Elp3"/>
    <property type="match status" value="1"/>
</dbReference>
<dbReference type="SUPFAM" id="SSF102114">
    <property type="entry name" value="Radical SAM enzymes"/>
    <property type="match status" value="1"/>
</dbReference>
<dbReference type="PROSITE" id="PS51918">
    <property type="entry name" value="RADICAL_SAM"/>
    <property type="match status" value="1"/>
</dbReference>
<proteinExistence type="inferred from homology"/>
<keyword id="KW-0004">4Fe-4S</keyword>
<keyword id="KW-0963">Cytoplasm</keyword>
<keyword id="KW-0408">Iron</keyword>
<keyword id="KW-0411">Iron-sulfur</keyword>
<keyword id="KW-0479">Metal-binding</keyword>
<keyword id="KW-0949">S-adenosyl-L-methionine</keyword>
<keyword id="KW-0808">Transferase</keyword>
<reference key="1">
    <citation type="journal article" date="2008" name="J. Bacteriol.">
        <title>Complete genome sequence of Neisseria gonorrhoeae NCCP11945.</title>
        <authorList>
            <person name="Chung G.T."/>
            <person name="Yoo J.S."/>
            <person name="Oh H.B."/>
            <person name="Lee Y.S."/>
            <person name="Cha S.H."/>
            <person name="Kim S.J."/>
            <person name="Yoo C.K."/>
        </authorList>
    </citation>
    <scope>NUCLEOTIDE SEQUENCE [LARGE SCALE GENOMIC DNA]</scope>
    <source>
        <strain>NCCP11945</strain>
    </source>
</reference>
<organism>
    <name type="scientific">Neisseria gonorrhoeae (strain NCCP11945)</name>
    <dbReference type="NCBI Taxonomy" id="521006"/>
    <lineage>
        <taxon>Bacteria</taxon>
        <taxon>Pseudomonadati</taxon>
        <taxon>Pseudomonadota</taxon>
        <taxon>Betaproteobacteria</taxon>
        <taxon>Neisseriales</taxon>
        <taxon>Neisseriaceae</taxon>
        <taxon>Neisseria</taxon>
    </lineage>
</organism>
<sequence>MSEIKTDDPKRGIKLRGADKTARIPIKVVPLQEKLKKPEWIRAKLPSRKFFEIKDILREQKMHTVCEEASCPNIGECFSKGTATFMIMGDICTRRCPFCDVGHGRPNMLDPDEPKNLAESVKAMNLRYVVITSVDRDDLRDGGAQHFADCIKAIRETSPNTKIEILVPDFRGRLDIALKILAETPPDVMNHNLETHPSLYRKARPGANYQHSLDLLKRYKEMMPHIPTKSGIMVGLGETDEDVREIMRDMRAHNIEMITIGQYLQPSDGHLPVLRYVTPEQFKIFEKEAYELGFTNAAIGAMVRSSYHADEQAAEALRESHGGCGHH</sequence>
<gene>
    <name evidence="1" type="primary">lipA</name>
    <name type="ordered locus">NGK_1019</name>
</gene>
<protein>
    <recommendedName>
        <fullName evidence="1">Lipoyl synthase</fullName>
        <ecNumber evidence="1">2.8.1.8</ecNumber>
    </recommendedName>
    <alternativeName>
        <fullName evidence="1">Lip-syn</fullName>
        <shortName evidence="1">LS</shortName>
    </alternativeName>
    <alternativeName>
        <fullName evidence="1">Lipoate synthase</fullName>
    </alternativeName>
    <alternativeName>
        <fullName evidence="1">Lipoic acid synthase</fullName>
    </alternativeName>
    <alternativeName>
        <fullName evidence="1">Sulfur insertion protein LipA</fullName>
    </alternativeName>
</protein>
<name>LIPA_NEIG2</name>
<evidence type="ECO:0000255" key="1">
    <source>
        <dbReference type="HAMAP-Rule" id="MF_00206"/>
    </source>
</evidence>
<evidence type="ECO:0000255" key="2">
    <source>
        <dbReference type="PROSITE-ProRule" id="PRU01266"/>
    </source>
</evidence>
<feature type="chain" id="PRO_1000099615" description="Lipoyl synthase">
    <location>
        <begin position="1"/>
        <end position="327"/>
    </location>
</feature>
<feature type="domain" description="Radical SAM core" evidence="2">
    <location>
        <begin position="78"/>
        <end position="295"/>
    </location>
</feature>
<feature type="binding site" evidence="1">
    <location>
        <position position="66"/>
    </location>
    <ligand>
        <name>[4Fe-4S] cluster</name>
        <dbReference type="ChEBI" id="CHEBI:49883"/>
        <label>1</label>
    </ligand>
</feature>
<feature type="binding site" evidence="1">
    <location>
        <position position="71"/>
    </location>
    <ligand>
        <name>[4Fe-4S] cluster</name>
        <dbReference type="ChEBI" id="CHEBI:49883"/>
        <label>1</label>
    </ligand>
</feature>
<feature type="binding site" evidence="1">
    <location>
        <position position="77"/>
    </location>
    <ligand>
        <name>[4Fe-4S] cluster</name>
        <dbReference type="ChEBI" id="CHEBI:49883"/>
        <label>1</label>
    </ligand>
</feature>
<feature type="binding site" evidence="1">
    <location>
        <position position="92"/>
    </location>
    <ligand>
        <name>[4Fe-4S] cluster</name>
        <dbReference type="ChEBI" id="CHEBI:49883"/>
        <label>2</label>
        <note>4Fe-4S-S-AdoMet</note>
    </ligand>
</feature>
<feature type="binding site" evidence="1">
    <location>
        <position position="96"/>
    </location>
    <ligand>
        <name>[4Fe-4S] cluster</name>
        <dbReference type="ChEBI" id="CHEBI:49883"/>
        <label>2</label>
        <note>4Fe-4S-S-AdoMet</note>
    </ligand>
</feature>
<feature type="binding site" evidence="1">
    <location>
        <position position="99"/>
    </location>
    <ligand>
        <name>[4Fe-4S] cluster</name>
        <dbReference type="ChEBI" id="CHEBI:49883"/>
        <label>2</label>
        <note>4Fe-4S-S-AdoMet</note>
    </ligand>
</feature>
<feature type="binding site" evidence="1">
    <location>
        <position position="306"/>
    </location>
    <ligand>
        <name>[4Fe-4S] cluster</name>
        <dbReference type="ChEBI" id="CHEBI:49883"/>
        <label>1</label>
    </ligand>
</feature>
<comment type="function">
    <text evidence="1">Catalyzes the radical-mediated insertion of two sulfur atoms into the C-6 and C-8 positions of the octanoyl moiety bound to the lipoyl domains of lipoate-dependent enzymes, thereby converting the octanoylated domains into lipoylated derivatives.</text>
</comment>
<comment type="catalytic activity">
    <reaction evidence="1">
        <text>[[Fe-S] cluster scaffold protein carrying a second [4Fe-4S](2+) cluster] + N(6)-octanoyl-L-lysyl-[protein] + 2 oxidized [2Fe-2S]-[ferredoxin] + 2 S-adenosyl-L-methionine + 4 H(+) = [[Fe-S] cluster scaffold protein] + N(6)-[(R)-dihydrolipoyl]-L-lysyl-[protein] + 4 Fe(3+) + 2 hydrogen sulfide + 2 5'-deoxyadenosine + 2 L-methionine + 2 reduced [2Fe-2S]-[ferredoxin]</text>
        <dbReference type="Rhea" id="RHEA:16585"/>
        <dbReference type="Rhea" id="RHEA-COMP:9928"/>
        <dbReference type="Rhea" id="RHEA-COMP:10000"/>
        <dbReference type="Rhea" id="RHEA-COMP:10001"/>
        <dbReference type="Rhea" id="RHEA-COMP:10475"/>
        <dbReference type="Rhea" id="RHEA-COMP:14568"/>
        <dbReference type="Rhea" id="RHEA-COMP:14569"/>
        <dbReference type="ChEBI" id="CHEBI:15378"/>
        <dbReference type="ChEBI" id="CHEBI:17319"/>
        <dbReference type="ChEBI" id="CHEBI:29034"/>
        <dbReference type="ChEBI" id="CHEBI:29919"/>
        <dbReference type="ChEBI" id="CHEBI:33722"/>
        <dbReference type="ChEBI" id="CHEBI:33737"/>
        <dbReference type="ChEBI" id="CHEBI:33738"/>
        <dbReference type="ChEBI" id="CHEBI:57844"/>
        <dbReference type="ChEBI" id="CHEBI:59789"/>
        <dbReference type="ChEBI" id="CHEBI:78809"/>
        <dbReference type="ChEBI" id="CHEBI:83100"/>
        <dbReference type="EC" id="2.8.1.8"/>
    </reaction>
</comment>
<comment type="cofactor">
    <cofactor evidence="1">
        <name>[4Fe-4S] cluster</name>
        <dbReference type="ChEBI" id="CHEBI:49883"/>
    </cofactor>
    <text evidence="1">Binds 2 [4Fe-4S] clusters per subunit. One cluster is coordinated with 3 cysteines and an exchangeable S-adenosyl-L-methionine.</text>
</comment>
<comment type="pathway">
    <text evidence="1">Protein modification; protein lipoylation via endogenous pathway; protein N(6)-(lipoyl)lysine from octanoyl-[acyl-carrier-protein]: step 2/2.</text>
</comment>
<comment type="subcellular location">
    <subcellularLocation>
        <location evidence="1">Cytoplasm</location>
    </subcellularLocation>
</comment>
<comment type="similarity">
    <text evidence="1">Belongs to the radical SAM superfamily. Lipoyl synthase family.</text>
</comment>
<accession>B4RLK9</accession>